<sequence>MAQSAVVKNEIIEKFKTHEGDTGSSEVQIALLTDRIQYLTDHFKTHKKDHHSRQGLLKLVGQRRSLLDYLKKKNVTTYRELIKALGIRK</sequence>
<name>RS15_DESPS</name>
<reference key="1">
    <citation type="journal article" date="2004" name="Environ. Microbiol.">
        <title>The genome of Desulfotalea psychrophila, a sulfate-reducing bacterium from permanently cold Arctic sediments.</title>
        <authorList>
            <person name="Rabus R."/>
            <person name="Ruepp A."/>
            <person name="Frickey T."/>
            <person name="Rattei T."/>
            <person name="Fartmann B."/>
            <person name="Stark M."/>
            <person name="Bauer M."/>
            <person name="Zibat A."/>
            <person name="Lombardot T."/>
            <person name="Becker I."/>
            <person name="Amann J."/>
            <person name="Gellner K."/>
            <person name="Teeling H."/>
            <person name="Leuschner W.D."/>
            <person name="Gloeckner F.-O."/>
            <person name="Lupas A.N."/>
            <person name="Amann R."/>
            <person name="Klenk H.-P."/>
        </authorList>
    </citation>
    <scope>NUCLEOTIDE SEQUENCE [LARGE SCALE GENOMIC DNA]</scope>
    <source>
        <strain>DSM 12343 / LSv54</strain>
    </source>
</reference>
<protein>
    <recommendedName>
        <fullName evidence="1">Small ribosomal subunit protein uS15</fullName>
    </recommendedName>
    <alternativeName>
        <fullName evidence="2">30S ribosomal protein S15</fullName>
    </alternativeName>
</protein>
<organism>
    <name type="scientific">Desulfotalea psychrophila (strain LSv54 / DSM 12343)</name>
    <dbReference type="NCBI Taxonomy" id="177439"/>
    <lineage>
        <taxon>Bacteria</taxon>
        <taxon>Pseudomonadati</taxon>
        <taxon>Thermodesulfobacteriota</taxon>
        <taxon>Desulfobulbia</taxon>
        <taxon>Desulfobulbales</taxon>
        <taxon>Desulfocapsaceae</taxon>
        <taxon>Desulfotalea</taxon>
    </lineage>
</organism>
<dbReference type="EMBL" id="CR522870">
    <property type="protein sequence ID" value="CAG37338.1"/>
    <property type="molecule type" value="Genomic_DNA"/>
</dbReference>
<dbReference type="RefSeq" id="WP_011189850.1">
    <property type="nucleotide sequence ID" value="NC_006138.1"/>
</dbReference>
<dbReference type="SMR" id="Q6AJY8"/>
<dbReference type="STRING" id="177439.DP2609"/>
<dbReference type="KEGG" id="dps:DP2609"/>
<dbReference type="eggNOG" id="COG0184">
    <property type="taxonomic scope" value="Bacteria"/>
</dbReference>
<dbReference type="HOGENOM" id="CLU_148518_0_0_7"/>
<dbReference type="OrthoDB" id="9799262at2"/>
<dbReference type="Proteomes" id="UP000000602">
    <property type="component" value="Chromosome"/>
</dbReference>
<dbReference type="GO" id="GO:0022627">
    <property type="term" value="C:cytosolic small ribosomal subunit"/>
    <property type="evidence" value="ECO:0007669"/>
    <property type="project" value="TreeGrafter"/>
</dbReference>
<dbReference type="GO" id="GO:0019843">
    <property type="term" value="F:rRNA binding"/>
    <property type="evidence" value="ECO:0007669"/>
    <property type="project" value="UniProtKB-UniRule"/>
</dbReference>
<dbReference type="GO" id="GO:0003735">
    <property type="term" value="F:structural constituent of ribosome"/>
    <property type="evidence" value="ECO:0007669"/>
    <property type="project" value="InterPro"/>
</dbReference>
<dbReference type="GO" id="GO:0006412">
    <property type="term" value="P:translation"/>
    <property type="evidence" value="ECO:0007669"/>
    <property type="project" value="UniProtKB-UniRule"/>
</dbReference>
<dbReference type="CDD" id="cd00353">
    <property type="entry name" value="Ribosomal_S15p_S13e"/>
    <property type="match status" value="1"/>
</dbReference>
<dbReference type="FunFam" id="1.10.287.10:FF:000002">
    <property type="entry name" value="30S ribosomal protein S15"/>
    <property type="match status" value="1"/>
</dbReference>
<dbReference type="Gene3D" id="6.10.250.3130">
    <property type="match status" value="1"/>
</dbReference>
<dbReference type="Gene3D" id="1.10.287.10">
    <property type="entry name" value="S15/NS1, RNA-binding"/>
    <property type="match status" value="1"/>
</dbReference>
<dbReference type="HAMAP" id="MF_01343_B">
    <property type="entry name" value="Ribosomal_uS15_B"/>
    <property type="match status" value="1"/>
</dbReference>
<dbReference type="InterPro" id="IPR000589">
    <property type="entry name" value="Ribosomal_uS15"/>
</dbReference>
<dbReference type="InterPro" id="IPR005290">
    <property type="entry name" value="Ribosomal_uS15_bac-type"/>
</dbReference>
<dbReference type="InterPro" id="IPR009068">
    <property type="entry name" value="uS15_NS1_RNA-bd_sf"/>
</dbReference>
<dbReference type="NCBIfam" id="TIGR00952">
    <property type="entry name" value="S15_bact"/>
    <property type="match status" value="1"/>
</dbReference>
<dbReference type="PANTHER" id="PTHR23321">
    <property type="entry name" value="RIBOSOMAL PROTEIN S15, BACTERIAL AND ORGANELLAR"/>
    <property type="match status" value="1"/>
</dbReference>
<dbReference type="PANTHER" id="PTHR23321:SF26">
    <property type="entry name" value="SMALL RIBOSOMAL SUBUNIT PROTEIN US15M"/>
    <property type="match status" value="1"/>
</dbReference>
<dbReference type="Pfam" id="PF00312">
    <property type="entry name" value="Ribosomal_S15"/>
    <property type="match status" value="1"/>
</dbReference>
<dbReference type="SMART" id="SM01387">
    <property type="entry name" value="Ribosomal_S15"/>
    <property type="match status" value="1"/>
</dbReference>
<dbReference type="SUPFAM" id="SSF47060">
    <property type="entry name" value="S15/NS1 RNA-binding domain"/>
    <property type="match status" value="1"/>
</dbReference>
<dbReference type="PROSITE" id="PS00362">
    <property type="entry name" value="RIBOSOMAL_S15"/>
    <property type="match status" value="1"/>
</dbReference>
<gene>
    <name evidence="1" type="primary">rpsO</name>
    <name type="ordered locus">DP2609</name>
</gene>
<feature type="chain" id="PRO_0000115430" description="Small ribosomal subunit protein uS15">
    <location>
        <begin position="1"/>
        <end position="89"/>
    </location>
</feature>
<evidence type="ECO:0000255" key="1">
    <source>
        <dbReference type="HAMAP-Rule" id="MF_01343"/>
    </source>
</evidence>
<evidence type="ECO:0000305" key="2"/>
<keyword id="KW-1185">Reference proteome</keyword>
<keyword id="KW-0687">Ribonucleoprotein</keyword>
<keyword id="KW-0689">Ribosomal protein</keyword>
<keyword id="KW-0694">RNA-binding</keyword>
<keyword id="KW-0699">rRNA-binding</keyword>
<accession>Q6AJY8</accession>
<comment type="function">
    <text evidence="1">One of the primary rRNA binding proteins, it binds directly to 16S rRNA where it helps nucleate assembly of the platform of the 30S subunit by binding and bridging several RNA helices of the 16S rRNA.</text>
</comment>
<comment type="function">
    <text evidence="1">Forms an intersubunit bridge (bridge B4) with the 23S rRNA of the 50S subunit in the ribosome.</text>
</comment>
<comment type="subunit">
    <text evidence="1">Part of the 30S ribosomal subunit. Forms a bridge to the 50S subunit in the 70S ribosome, contacting the 23S rRNA.</text>
</comment>
<comment type="similarity">
    <text evidence="1">Belongs to the universal ribosomal protein uS15 family.</text>
</comment>
<proteinExistence type="inferred from homology"/>